<reference key="1">
    <citation type="submission" date="2008-05" db="EMBL/GenBank/DDBJ databases">
        <title>Complete sequence of Shigella boydii serotype 18 strain BS512.</title>
        <authorList>
            <person name="Rasko D.A."/>
            <person name="Rosovitz M."/>
            <person name="Maurelli A.T."/>
            <person name="Myers G."/>
            <person name="Seshadri R."/>
            <person name="Cer R."/>
            <person name="Jiang L."/>
            <person name="Ravel J."/>
            <person name="Sebastian Y."/>
        </authorList>
    </citation>
    <scope>NUCLEOTIDE SEQUENCE [LARGE SCALE GENOMIC DNA]</scope>
    <source>
        <strain>CDC 3083-94 / BS512</strain>
    </source>
</reference>
<organism>
    <name type="scientific">Shigella boydii serotype 18 (strain CDC 3083-94 / BS512)</name>
    <dbReference type="NCBI Taxonomy" id="344609"/>
    <lineage>
        <taxon>Bacteria</taxon>
        <taxon>Pseudomonadati</taxon>
        <taxon>Pseudomonadota</taxon>
        <taxon>Gammaproteobacteria</taxon>
        <taxon>Enterobacterales</taxon>
        <taxon>Enterobacteriaceae</taxon>
        <taxon>Shigella</taxon>
    </lineage>
</organism>
<comment type="function">
    <text evidence="1">Is probably a protein kinase regulator of UbiI activity which is involved in aerobic coenzyme Q (ubiquinone) biosynthesis.</text>
</comment>
<comment type="pathway">
    <text>Cofactor biosynthesis; ubiquinone biosynthesis [regulation].</text>
</comment>
<comment type="subcellular location">
    <subcellularLocation>
        <location evidence="1">Cell inner membrane</location>
        <topology evidence="1">Multi-pass membrane protein</topology>
    </subcellularLocation>
</comment>
<comment type="similarity">
    <text evidence="1">Belongs to the ABC1 family. UbiB subfamily.</text>
</comment>
<name>UBIB_SHIB3</name>
<proteinExistence type="inferred from homology"/>
<keyword id="KW-0067">ATP-binding</keyword>
<keyword id="KW-0997">Cell inner membrane</keyword>
<keyword id="KW-1003">Cell membrane</keyword>
<keyword id="KW-0418">Kinase</keyword>
<keyword id="KW-0472">Membrane</keyword>
<keyword id="KW-0547">Nucleotide-binding</keyword>
<keyword id="KW-1185">Reference proteome</keyword>
<keyword id="KW-0808">Transferase</keyword>
<keyword id="KW-0812">Transmembrane</keyword>
<keyword id="KW-1133">Transmembrane helix</keyword>
<keyword id="KW-0831">Ubiquinone biosynthesis</keyword>
<dbReference type="EC" id="2.7.-.-" evidence="1"/>
<dbReference type="EMBL" id="CP001063">
    <property type="protein sequence ID" value="ACD09735.1"/>
    <property type="molecule type" value="Genomic_DNA"/>
</dbReference>
<dbReference type="RefSeq" id="WP_000187530.1">
    <property type="nucleotide sequence ID" value="NC_010658.1"/>
</dbReference>
<dbReference type="SMR" id="B2TVI6"/>
<dbReference type="STRING" id="344609.SbBS512_E4307"/>
<dbReference type="GeneID" id="75204829"/>
<dbReference type="KEGG" id="sbc:SbBS512_E4307"/>
<dbReference type="HOGENOM" id="CLU_006533_0_0_6"/>
<dbReference type="UniPathway" id="UPA00232"/>
<dbReference type="Proteomes" id="UP000001030">
    <property type="component" value="Chromosome"/>
</dbReference>
<dbReference type="GO" id="GO:0005886">
    <property type="term" value="C:plasma membrane"/>
    <property type="evidence" value="ECO:0007669"/>
    <property type="project" value="UniProtKB-SubCell"/>
</dbReference>
<dbReference type="GO" id="GO:0005524">
    <property type="term" value="F:ATP binding"/>
    <property type="evidence" value="ECO:0007669"/>
    <property type="project" value="UniProtKB-KW"/>
</dbReference>
<dbReference type="GO" id="GO:0004672">
    <property type="term" value="F:protein kinase activity"/>
    <property type="evidence" value="ECO:0007669"/>
    <property type="project" value="UniProtKB-UniRule"/>
</dbReference>
<dbReference type="GO" id="GO:0010795">
    <property type="term" value="P:regulation of ubiquinone biosynthetic process"/>
    <property type="evidence" value="ECO:0007669"/>
    <property type="project" value="UniProtKB-UniRule"/>
</dbReference>
<dbReference type="GO" id="GO:0006744">
    <property type="term" value="P:ubiquinone biosynthetic process"/>
    <property type="evidence" value="ECO:0007669"/>
    <property type="project" value="UniProtKB-UniPathway"/>
</dbReference>
<dbReference type="CDD" id="cd13972">
    <property type="entry name" value="UbiB"/>
    <property type="match status" value="1"/>
</dbReference>
<dbReference type="HAMAP" id="MF_00414">
    <property type="entry name" value="UbiB"/>
    <property type="match status" value="1"/>
</dbReference>
<dbReference type="InterPro" id="IPR004147">
    <property type="entry name" value="ABC1_dom"/>
</dbReference>
<dbReference type="InterPro" id="IPR011009">
    <property type="entry name" value="Kinase-like_dom_sf"/>
</dbReference>
<dbReference type="InterPro" id="IPR010232">
    <property type="entry name" value="UbiB"/>
</dbReference>
<dbReference type="InterPro" id="IPR045308">
    <property type="entry name" value="UbiB_bact"/>
</dbReference>
<dbReference type="InterPro" id="IPR050154">
    <property type="entry name" value="UbiB_kinase"/>
</dbReference>
<dbReference type="NCBIfam" id="NF003404">
    <property type="entry name" value="PRK04750.1"/>
    <property type="match status" value="1"/>
</dbReference>
<dbReference type="NCBIfam" id="TIGR01982">
    <property type="entry name" value="UbiB"/>
    <property type="match status" value="1"/>
</dbReference>
<dbReference type="PANTHER" id="PTHR10566">
    <property type="entry name" value="CHAPERONE-ACTIVITY OF BC1 COMPLEX CABC1 -RELATED"/>
    <property type="match status" value="1"/>
</dbReference>
<dbReference type="PANTHER" id="PTHR10566:SF113">
    <property type="entry name" value="PROTEIN ACTIVITY OF BC1 COMPLEX KINASE 7, CHLOROPLASTIC"/>
    <property type="match status" value="1"/>
</dbReference>
<dbReference type="Pfam" id="PF03109">
    <property type="entry name" value="ABC1"/>
    <property type="match status" value="1"/>
</dbReference>
<dbReference type="SUPFAM" id="SSF56112">
    <property type="entry name" value="Protein kinase-like (PK-like)"/>
    <property type="match status" value="1"/>
</dbReference>
<gene>
    <name evidence="1" type="primary">ubiB</name>
    <name type="ordered locus">SbBS512_E4307</name>
</gene>
<accession>B2TVI6</accession>
<protein>
    <recommendedName>
        <fullName evidence="1">Probable protein kinase UbiB</fullName>
        <ecNumber evidence="1">2.7.-.-</ecNumber>
    </recommendedName>
    <alternativeName>
        <fullName evidence="1">Ubiquinone biosynthesis protein UbiB</fullName>
    </alternativeName>
</protein>
<evidence type="ECO:0000255" key="1">
    <source>
        <dbReference type="HAMAP-Rule" id="MF_00414"/>
    </source>
</evidence>
<sequence>MTPGEVRRLYFIIRTFLSYGLDELIPKMRITLPLRLWRYSLFWMPNRHKDKLLGERLRLALQELGPVWIKFGQMLSTRRDLFPPHIADQLALLQDKVAPFDGKLAKQQIEAAMGGLPVEAWFDDFEIKPLASASIAQVHTARLKSNGKEVVIKVIRPDILPVIKADLKLIYRLARWVPRLLPDGRRLRPTEVVREYEKTLIDELNLLRESANAIQLRRNFEDSPMLYIPEVYPDYCSEGMMVMERIYGIPVSDVAALEKNGTNMKLLAERGVQVFFTQVFRDSFFHADMHPGNIFVSYEHPENPKYIGIDCGIVGSLNKEDKRYLAENFIAFFNRDYRKVAELHVDSGWVPPDTNVEEFEFAIRTVCEPIFEKPLAEISFGHVLLNLFNTARRFNMEVQPQLVLLQKTLLYVEGVGRQLYPQLDLWKTAKPFLESWIKDQVGIPALVRAFKEKAPFWVEKMPELPELVYDSLRQGKYLQHSVDKIARELQSNHVRQGQSRYFLGIGATLVLSGTFLLVSRPEWGLMPGWLMAGGLIAWFVGWRKTR</sequence>
<feature type="chain" id="PRO_1000123929" description="Probable protein kinase UbiB">
    <location>
        <begin position="1"/>
        <end position="546"/>
    </location>
</feature>
<feature type="transmembrane region" description="Helical" evidence="1">
    <location>
        <begin position="501"/>
        <end position="521"/>
    </location>
</feature>
<feature type="transmembrane region" description="Helical" evidence="1">
    <location>
        <begin position="522"/>
        <end position="542"/>
    </location>
</feature>
<feature type="domain" description="Protein kinase" evidence="1">
    <location>
        <begin position="124"/>
        <end position="502"/>
    </location>
</feature>
<feature type="active site" description="Proton acceptor" evidence="1">
    <location>
        <position position="288"/>
    </location>
</feature>
<feature type="binding site" evidence="1">
    <location>
        <begin position="130"/>
        <end position="138"/>
    </location>
    <ligand>
        <name>ATP</name>
        <dbReference type="ChEBI" id="CHEBI:30616"/>
    </ligand>
</feature>
<feature type="binding site" evidence="1">
    <location>
        <position position="153"/>
    </location>
    <ligand>
        <name>ATP</name>
        <dbReference type="ChEBI" id="CHEBI:30616"/>
    </ligand>
</feature>